<accession>A4TN29</accession>
<reference key="1">
    <citation type="submission" date="2007-02" db="EMBL/GenBank/DDBJ databases">
        <title>Complete sequence of chromosome of Yersinia pestis Pestoides F.</title>
        <authorList>
            <consortium name="US DOE Joint Genome Institute"/>
            <person name="Copeland A."/>
            <person name="Lucas S."/>
            <person name="Lapidus A."/>
            <person name="Barry K."/>
            <person name="Detter J.C."/>
            <person name="Glavina del Rio T."/>
            <person name="Hammon N."/>
            <person name="Israni S."/>
            <person name="Dalin E."/>
            <person name="Tice H."/>
            <person name="Pitluck S."/>
            <person name="Di Bartolo G."/>
            <person name="Chain P."/>
            <person name="Malfatti S."/>
            <person name="Shin M."/>
            <person name="Vergez L."/>
            <person name="Schmutz J."/>
            <person name="Larimer F."/>
            <person name="Land M."/>
            <person name="Hauser L."/>
            <person name="Worsham P."/>
            <person name="Chu M."/>
            <person name="Bearden S."/>
            <person name="Garcia E."/>
            <person name="Richardson P."/>
        </authorList>
    </citation>
    <scope>NUCLEOTIDE SEQUENCE [LARGE SCALE GENOMIC DNA]</scope>
    <source>
        <strain>Pestoides F</strain>
    </source>
</reference>
<sequence length="430" mass="48569">MLDPNMLRNELDAVAEKLARRGFKLDVEVLRQQEERRKVLQVETESLQAERNSRSKQIGAAKARGEDIEPLRLEVNALGEKLDAAKAELDKLQNEIRDLALSIPNLPDDSVPVGKNENDNIEVSRWGEPRKYDFDVKDHVSLGEMAGGLDFAAAVKLTGARFVVMKGQIARMHRALSQFMLDLHTEKHGYLEAYVPYLVNHATLYGTGQLPKFGEDLFHTKPLAEESDNSNYALIPTAEVPLTNLVRDEILEEDSLPLKLTAHTPCFRSEAGSYGRDTRGLIRMHQFDKVEMVQITRPEDSMAALEELTGHAEKVLQLLELPYRKVLLCTGDMGFGSSKTYDLEVWLPAQDTYREISSCSNMWDFQARRMQARYRNKTDRKTRLVHTLNGSGLAVGRTLVAVLENYQQADGRIQVPDVLRPYMGGLEYIG</sequence>
<protein>
    <recommendedName>
        <fullName evidence="1">Serine--tRNA ligase</fullName>
        <ecNumber evidence="1">6.1.1.11</ecNumber>
    </recommendedName>
    <alternativeName>
        <fullName evidence="1">Seryl-tRNA synthetase</fullName>
        <shortName evidence="1">SerRS</shortName>
    </alternativeName>
    <alternativeName>
        <fullName evidence="1">Seryl-tRNA(Ser/Sec) synthetase</fullName>
    </alternativeName>
</protein>
<name>SYS_YERPP</name>
<comment type="function">
    <text evidence="1">Catalyzes the attachment of serine to tRNA(Ser). Is also able to aminoacylate tRNA(Sec) with serine, to form the misacylated tRNA L-seryl-tRNA(Sec), which will be further converted into selenocysteinyl-tRNA(Sec).</text>
</comment>
<comment type="catalytic activity">
    <reaction evidence="1">
        <text>tRNA(Ser) + L-serine + ATP = L-seryl-tRNA(Ser) + AMP + diphosphate + H(+)</text>
        <dbReference type="Rhea" id="RHEA:12292"/>
        <dbReference type="Rhea" id="RHEA-COMP:9669"/>
        <dbReference type="Rhea" id="RHEA-COMP:9703"/>
        <dbReference type="ChEBI" id="CHEBI:15378"/>
        <dbReference type="ChEBI" id="CHEBI:30616"/>
        <dbReference type="ChEBI" id="CHEBI:33019"/>
        <dbReference type="ChEBI" id="CHEBI:33384"/>
        <dbReference type="ChEBI" id="CHEBI:78442"/>
        <dbReference type="ChEBI" id="CHEBI:78533"/>
        <dbReference type="ChEBI" id="CHEBI:456215"/>
        <dbReference type="EC" id="6.1.1.11"/>
    </reaction>
</comment>
<comment type="catalytic activity">
    <reaction evidence="1">
        <text>tRNA(Sec) + L-serine + ATP = L-seryl-tRNA(Sec) + AMP + diphosphate + H(+)</text>
        <dbReference type="Rhea" id="RHEA:42580"/>
        <dbReference type="Rhea" id="RHEA-COMP:9742"/>
        <dbReference type="Rhea" id="RHEA-COMP:10128"/>
        <dbReference type="ChEBI" id="CHEBI:15378"/>
        <dbReference type="ChEBI" id="CHEBI:30616"/>
        <dbReference type="ChEBI" id="CHEBI:33019"/>
        <dbReference type="ChEBI" id="CHEBI:33384"/>
        <dbReference type="ChEBI" id="CHEBI:78442"/>
        <dbReference type="ChEBI" id="CHEBI:78533"/>
        <dbReference type="ChEBI" id="CHEBI:456215"/>
        <dbReference type="EC" id="6.1.1.11"/>
    </reaction>
</comment>
<comment type="pathway">
    <text evidence="1">Aminoacyl-tRNA biosynthesis; selenocysteinyl-tRNA(Sec) biosynthesis; L-seryl-tRNA(Sec) from L-serine and tRNA(Sec): step 1/1.</text>
</comment>
<comment type="subunit">
    <text evidence="1">Homodimer. The tRNA molecule binds across the dimer.</text>
</comment>
<comment type="subcellular location">
    <subcellularLocation>
        <location evidence="1">Cytoplasm</location>
    </subcellularLocation>
</comment>
<comment type="domain">
    <text evidence="1">Consists of two distinct domains, a catalytic core and a N-terminal extension that is involved in tRNA binding.</text>
</comment>
<comment type="similarity">
    <text evidence="1">Belongs to the class-II aminoacyl-tRNA synthetase family. Type-1 seryl-tRNA synthetase subfamily.</text>
</comment>
<keyword id="KW-0030">Aminoacyl-tRNA synthetase</keyword>
<keyword id="KW-0067">ATP-binding</keyword>
<keyword id="KW-0963">Cytoplasm</keyword>
<keyword id="KW-0436">Ligase</keyword>
<keyword id="KW-0547">Nucleotide-binding</keyword>
<keyword id="KW-0648">Protein biosynthesis</keyword>
<feature type="chain" id="PRO_1000019872" description="Serine--tRNA ligase">
    <location>
        <begin position="1"/>
        <end position="430"/>
    </location>
</feature>
<feature type="binding site" evidence="1">
    <location>
        <begin position="237"/>
        <end position="239"/>
    </location>
    <ligand>
        <name>L-serine</name>
        <dbReference type="ChEBI" id="CHEBI:33384"/>
    </ligand>
</feature>
<feature type="binding site" evidence="1">
    <location>
        <begin position="268"/>
        <end position="270"/>
    </location>
    <ligand>
        <name>ATP</name>
        <dbReference type="ChEBI" id="CHEBI:30616"/>
    </ligand>
</feature>
<feature type="binding site" evidence="1">
    <location>
        <position position="291"/>
    </location>
    <ligand>
        <name>L-serine</name>
        <dbReference type="ChEBI" id="CHEBI:33384"/>
    </ligand>
</feature>
<feature type="binding site" evidence="1">
    <location>
        <begin position="355"/>
        <end position="358"/>
    </location>
    <ligand>
        <name>ATP</name>
        <dbReference type="ChEBI" id="CHEBI:30616"/>
    </ligand>
</feature>
<feature type="binding site" evidence="1">
    <location>
        <position position="391"/>
    </location>
    <ligand>
        <name>L-serine</name>
        <dbReference type="ChEBI" id="CHEBI:33384"/>
    </ligand>
</feature>
<organism>
    <name type="scientific">Yersinia pestis (strain Pestoides F)</name>
    <dbReference type="NCBI Taxonomy" id="386656"/>
    <lineage>
        <taxon>Bacteria</taxon>
        <taxon>Pseudomonadati</taxon>
        <taxon>Pseudomonadota</taxon>
        <taxon>Gammaproteobacteria</taxon>
        <taxon>Enterobacterales</taxon>
        <taxon>Yersiniaceae</taxon>
        <taxon>Yersinia</taxon>
    </lineage>
</organism>
<gene>
    <name evidence="1" type="primary">serS</name>
    <name type="ordered locus">YPDSF_2316</name>
</gene>
<proteinExistence type="inferred from homology"/>
<dbReference type="EC" id="6.1.1.11" evidence="1"/>
<dbReference type="EMBL" id="CP000668">
    <property type="protein sequence ID" value="ABP40691.1"/>
    <property type="molecule type" value="Genomic_DNA"/>
</dbReference>
<dbReference type="RefSeq" id="WP_002211336.1">
    <property type="nucleotide sequence ID" value="NZ_CP009715.1"/>
</dbReference>
<dbReference type="SMR" id="A4TN29"/>
<dbReference type="GeneID" id="57977175"/>
<dbReference type="KEGG" id="ypp:YPDSF_2316"/>
<dbReference type="PATRIC" id="fig|386656.14.peg.3811"/>
<dbReference type="UniPathway" id="UPA00906">
    <property type="reaction ID" value="UER00895"/>
</dbReference>
<dbReference type="GO" id="GO:0005737">
    <property type="term" value="C:cytoplasm"/>
    <property type="evidence" value="ECO:0007669"/>
    <property type="project" value="UniProtKB-SubCell"/>
</dbReference>
<dbReference type="GO" id="GO:0005524">
    <property type="term" value="F:ATP binding"/>
    <property type="evidence" value="ECO:0007669"/>
    <property type="project" value="UniProtKB-UniRule"/>
</dbReference>
<dbReference type="GO" id="GO:0004828">
    <property type="term" value="F:serine-tRNA ligase activity"/>
    <property type="evidence" value="ECO:0007669"/>
    <property type="project" value="UniProtKB-UniRule"/>
</dbReference>
<dbReference type="GO" id="GO:0016260">
    <property type="term" value="P:selenocysteine biosynthetic process"/>
    <property type="evidence" value="ECO:0007669"/>
    <property type="project" value="UniProtKB-UniRule"/>
</dbReference>
<dbReference type="GO" id="GO:0006434">
    <property type="term" value="P:seryl-tRNA aminoacylation"/>
    <property type="evidence" value="ECO:0007669"/>
    <property type="project" value="UniProtKB-UniRule"/>
</dbReference>
<dbReference type="CDD" id="cd00770">
    <property type="entry name" value="SerRS_core"/>
    <property type="match status" value="1"/>
</dbReference>
<dbReference type="FunFam" id="1.10.287.40:FF:000001">
    <property type="entry name" value="Serine--tRNA ligase"/>
    <property type="match status" value="1"/>
</dbReference>
<dbReference type="FunFam" id="3.30.930.10:FF:000018">
    <property type="entry name" value="Serine--tRNA ligase"/>
    <property type="match status" value="1"/>
</dbReference>
<dbReference type="Gene3D" id="3.30.930.10">
    <property type="entry name" value="Bira Bifunctional Protein, Domain 2"/>
    <property type="match status" value="1"/>
</dbReference>
<dbReference type="Gene3D" id="1.10.287.40">
    <property type="entry name" value="Serine-tRNA synthetase, tRNA binding domain"/>
    <property type="match status" value="1"/>
</dbReference>
<dbReference type="HAMAP" id="MF_00176">
    <property type="entry name" value="Ser_tRNA_synth_type1"/>
    <property type="match status" value="1"/>
</dbReference>
<dbReference type="InterPro" id="IPR002314">
    <property type="entry name" value="aa-tRNA-synt_IIb"/>
</dbReference>
<dbReference type="InterPro" id="IPR006195">
    <property type="entry name" value="aa-tRNA-synth_II"/>
</dbReference>
<dbReference type="InterPro" id="IPR045864">
    <property type="entry name" value="aa-tRNA-synth_II/BPL/LPL"/>
</dbReference>
<dbReference type="InterPro" id="IPR002317">
    <property type="entry name" value="Ser-tRNA-ligase_type_1"/>
</dbReference>
<dbReference type="InterPro" id="IPR015866">
    <property type="entry name" value="Ser-tRNA-synth_1_N"/>
</dbReference>
<dbReference type="InterPro" id="IPR042103">
    <property type="entry name" value="SerRS_1_N_sf"/>
</dbReference>
<dbReference type="InterPro" id="IPR033729">
    <property type="entry name" value="SerRS_core"/>
</dbReference>
<dbReference type="InterPro" id="IPR010978">
    <property type="entry name" value="tRNA-bd_arm"/>
</dbReference>
<dbReference type="NCBIfam" id="TIGR00414">
    <property type="entry name" value="serS"/>
    <property type="match status" value="1"/>
</dbReference>
<dbReference type="PANTHER" id="PTHR43697:SF1">
    <property type="entry name" value="SERINE--TRNA LIGASE"/>
    <property type="match status" value="1"/>
</dbReference>
<dbReference type="PANTHER" id="PTHR43697">
    <property type="entry name" value="SERYL-TRNA SYNTHETASE"/>
    <property type="match status" value="1"/>
</dbReference>
<dbReference type="Pfam" id="PF02403">
    <property type="entry name" value="Seryl_tRNA_N"/>
    <property type="match status" value="1"/>
</dbReference>
<dbReference type="Pfam" id="PF00587">
    <property type="entry name" value="tRNA-synt_2b"/>
    <property type="match status" value="1"/>
</dbReference>
<dbReference type="PIRSF" id="PIRSF001529">
    <property type="entry name" value="Ser-tRNA-synth_IIa"/>
    <property type="match status" value="1"/>
</dbReference>
<dbReference type="PRINTS" id="PR00981">
    <property type="entry name" value="TRNASYNTHSER"/>
</dbReference>
<dbReference type="SUPFAM" id="SSF55681">
    <property type="entry name" value="Class II aaRS and biotin synthetases"/>
    <property type="match status" value="1"/>
</dbReference>
<dbReference type="SUPFAM" id="SSF46589">
    <property type="entry name" value="tRNA-binding arm"/>
    <property type="match status" value="1"/>
</dbReference>
<dbReference type="PROSITE" id="PS50862">
    <property type="entry name" value="AA_TRNA_LIGASE_II"/>
    <property type="match status" value="1"/>
</dbReference>
<evidence type="ECO:0000255" key="1">
    <source>
        <dbReference type="HAMAP-Rule" id="MF_00176"/>
    </source>
</evidence>